<evidence type="ECO:0000255" key="1">
    <source>
        <dbReference type="HAMAP-Rule" id="MF_01411"/>
    </source>
</evidence>
<evidence type="ECO:0000305" key="2"/>
<keyword id="KW-0998">Cell outer membrane</keyword>
<keyword id="KW-0472">Membrane</keyword>
<keyword id="KW-0732">Signal</keyword>
<accession>Q1C0H2</accession>
<comment type="function">
    <text evidence="1">Together with LptE, is involved in the assembly of lipopolysaccharide (LPS) at the surface of the outer membrane.</text>
</comment>
<comment type="subunit">
    <text evidence="1">Component of the lipopolysaccharide transport and assembly complex. Interacts with LptE and LptA.</text>
</comment>
<comment type="subcellular location">
    <subcellularLocation>
        <location evidence="1">Cell outer membrane</location>
    </subcellularLocation>
</comment>
<comment type="similarity">
    <text evidence="1">Belongs to the LptD family.</text>
</comment>
<comment type="sequence caution" evidence="2">
    <conflict type="erroneous initiation">
        <sequence resource="EMBL-CDS" id="ABG16050"/>
    </conflict>
</comment>
<reference key="1">
    <citation type="journal article" date="2006" name="J. Bacteriol.">
        <title>Complete genome sequence of Yersinia pestis strains Antiqua and Nepal516: evidence of gene reduction in an emerging pathogen.</title>
        <authorList>
            <person name="Chain P.S.G."/>
            <person name="Hu P."/>
            <person name="Malfatti S.A."/>
            <person name="Radnedge L."/>
            <person name="Larimer F."/>
            <person name="Vergez L.M."/>
            <person name="Worsham P."/>
            <person name="Chu M.C."/>
            <person name="Andersen G.L."/>
        </authorList>
    </citation>
    <scope>NUCLEOTIDE SEQUENCE [LARGE SCALE GENOMIC DNA]</scope>
    <source>
        <strain>Antiqua</strain>
    </source>
</reference>
<sequence>MKKRFPTLLATLIWTALYSQHTLADLAEQCMLGVPTYDQPLVTGDPNQLPVRINADKTEANYPDNALFTGNVIVQQGNSTLTANQVELTQVQKPGEVIPLRTVTATGDVNYDDPQIKLKGPKGWSNLNTKDTDMDKGKYQMVGRQGRGDADLMKLRDQSRYTILKNGTFTSCLPGDNSWSVVGSEVIHDREEQVVEVWNARFKIGKVPVFYSPYMQLPVGDKRRSGFLIPNAKFTSNNGFEFLLPYYWNIAPNFDATITPHYMERRGLQWQNEFRYLLAPGSGTMALDWLPNDRIYTGPDGTDKNATRWLYYWGHSGVMDQVWRFNINYTRVSDPAYFTDLTSQYGSTTDGYATQIFTAGYANENWNATLSSKQFQVFTAAGNSNAYRAQPQLDMNYYKNDVGPFDMHVYGQAAKFTSVNPTNPEASRFHIEPTVNLPLSNSWGSINTEAKLLATHYQQDIPASFADNASNPKLKDSVNRVLPQFKVDGKVVFDRSMDWATGFTQTLEPRAQYLYVPYRNQDDIYIYDTTLMQSDYSGLFRDRTYSGLDRIASANQVSTGLTSRIYDDARVERFNVSVGQIYYFSRSRTGNTEAIDNSNATGSLVWAGDTFWRINDQLGLKGGAQYDTRLGSLTLGNAIMEYRKDADRMIQLNYRYASPKYIQAAVPKVYNPDYQQGISQVGTTASWPIADRWAIVGAYYYDTKAKQPASQLVGLQYNTCCWAVNLGYERKITGWNAQGQTSKYDNKIGFNIELRGLSGGHSLGTAQMLNSGILPYQSAF</sequence>
<proteinExistence type="inferred from homology"/>
<gene>
    <name evidence="1" type="primary">lptD</name>
    <name type="synonym">imp</name>
    <name type="synonym">ostA</name>
    <name type="ordered locus">YPA_4089</name>
</gene>
<dbReference type="EMBL" id="CP000308">
    <property type="protein sequence ID" value="ABG16050.1"/>
    <property type="status" value="ALT_INIT"/>
    <property type="molecule type" value="Genomic_DNA"/>
</dbReference>
<dbReference type="RefSeq" id="WP_002228111.1">
    <property type="nucleotide sequence ID" value="NZ_CP009906.1"/>
</dbReference>
<dbReference type="SMR" id="Q1C0H2"/>
<dbReference type="GeneID" id="57974115"/>
<dbReference type="KEGG" id="ypa:YPA_4089"/>
<dbReference type="Proteomes" id="UP000001971">
    <property type="component" value="Chromosome"/>
</dbReference>
<dbReference type="GO" id="GO:0009279">
    <property type="term" value="C:cell outer membrane"/>
    <property type="evidence" value="ECO:0007669"/>
    <property type="project" value="UniProtKB-SubCell"/>
</dbReference>
<dbReference type="GO" id="GO:1990351">
    <property type="term" value="C:transporter complex"/>
    <property type="evidence" value="ECO:0007669"/>
    <property type="project" value="TreeGrafter"/>
</dbReference>
<dbReference type="GO" id="GO:0043165">
    <property type="term" value="P:Gram-negative-bacterium-type cell outer membrane assembly"/>
    <property type="evidence" value="ECO:0007669"/>
    <property type="project" value="UniProtKB-UniRule"/>
</dbReference>
<dbReference type="GO" id="GO:0015920">
    <property type="term" value="P:lipopolysaccharide transport"/>
    <property type="evidence" value="ECO:0007669"/>
    <property type="project" value="InterPro"/>
</dbReference>
<dbReference type="Gene3D" id="2.60.450.10">
    <property type="entry name" value="Lipopolysaccharide (LPS) transport protein A like domain"/>
    <property type="match status" value="1"/>
</dbReference>
<dbReference type="HAMAP" id="MF_01411">
    <property type="entry name" value="LPS_assembly_LptD"/>
    <property type="match status" value="1"/>
</dbReference>
<dbReference type="InterPro" id="IPR020889">
    <property type="entry name" value="LipoPS_assembly_LptD"/>
</dbReference>
<dbReference type="InterPro" id="IPR050218">
    <property type="entry name" value="LptD"/>
</dbReference>
<dbReference type="InterPro" id="IPR007543">
    <property type="entry name" value="LptD_C"/>
</dbReference>
<dbReference type="InterPro" id="IPR005653">
    <property type="entry name" value="OstA-like_N"/>
</dbReference>
<dbReference type="NCBIfam" id="NF002997">
    <property type="entry name" value="PRK03761.1"/>
    <property type="match status" value="1"/>
</dbReference>
<dbReference type="PANTHER" id="PTHR30189">
    <property type="entry name" value="LPS-ASSEMBLY PROTEIN"/>
    <property type="match status" value="1"/>
</dbReference>
<dbReference type="PANTHER" id="PTHR30189:SF1">
    <property type="entry name" value="LPS-ASSEMBLY PROTEIN LPTD"/>
    <property type="match status" value="1"/>
</dbReference>
<dbReference type="Pfam" id="PF04453">
    <property type="entry name" value="LptD"/>
    <property type="match status" value="1"/>
</dbReference>
<dbReference type="Pfam" id="PF03968">
    <property type="entry name" value="LptD_N"/>
    <property type="match status" value="1"/>
</dbReference>
<organism>
    <name type="scientific">Yersinia pestis bv. Antiqua (strain Antiqua)</name>
    <dbReference type="NCBI Taxonomy" id="360102"/>
    <lineage>
        <taxon>Bacteria</taxon>
        <taxon>Pseudomonadati</taxon>
        <taxon>Pseudomonadota</taxon>
        <taxon>Gammaproteobacteria</taxon>
        <taxon>Enterobacterales</taxon>
        <taxon>Yersiniaceae</taxon>
        <taxon>Yersinia</taxon>
    </lineage>
</organism>
<protein>
    <recommendedName>
        <fullName evidence="1">LPS-assembly protein LptD</fullName>
    </recommendedName>
</protein>
<feature type="signal peptide" evidence="1">
    <location>
        <begin position="1"/>
        <end position="24"/>
    </location>
</feature>
<feature type="chain" id="PRO_5000116369" description="LPS-assembly protein LptD">
    <location>
        <begin position="25"/>
        <end position="780"/>
    </location>
</feature>
<name>LPTD_YERPA</name>